<sequence length="186" mass="20557">MDDYTQSINDAVKCLRQGGVIAYPTEAVYGLGCDPFNHDAVAQLLTIKKRSIKKGFILIASEWKQVEPLTEPIDPKALARVFDTWPGPFTWTFPASKEAPHWITGQHSTIAIRVTAHPLAKLLCQRFAGPLISSSANQEGEPPIRDVKILRLVFGNKIDKTLEGPLGPTHRPTPIRDAITGEILRL</sequence>
<protein>
    <recommendedName>
        <fullName evidence="1">Threonylcarbamoyl-AMP synthase</fullName>
        <shortName evidence="1">TC-AMP synthase</shortName>
        <ecNumber evidence="1">2.7.7.87</ecNumber>
    </recommendedName>
    <alternativeName>
        <fullName evidence="1">L-threonylcarbamoyladenylate synthase</fullName>
    </alternativeName>
    <alternativeName>
        <fullName evidence="1">t(6)A37 threonylcarbamoyladenosine biosynthesis protein TsaC</fullName>
    </alternativeName>
    <alternativeName>
        <fullName evidence="1">tRNA threonylcarbamoyladenosine biosynthesis protein TsaC</fullName>
    </alternativeName>
</protein>
<evidence type="ECO:0000255" key="1">
    <source>
        <dbReference type="HAMAP-Rule" id="MF_01852"/>
    </source>
</evidence>
<comment type="function">
    <text evidence="1">Required for the formation of a threonylcarbamoyl group on adenosine at position 37 (t(6)A37) in tRNAs that read codons beginning with adenine. Catalyzes the conversion of L-threonine, HCO(3)(-)/CO(2) and ATP to give threonylcarbamoyl-AMP (TC-AMP) as the acyladenylate intermediate, with the release of diphosphate.</text>
</comment>
<comment type="catalytic activity">
    <reaction evidence="1">
        <text>L-threonine + hydrogencarbonate + ATP = L-threonylcarbamoyladenylate + diphosphate + H2O</text>
        <dbReference type="Rhea" id="RHEA:36407"/>
        <dbReference type="ChEBI" id="CHEBI:15377"/>
        <dbReference type="ChEBI" id="CHEBI:17544"/>
        <dbReference type="ChEBI" id="CHEBI:30616"/>
        <dbReference type="ChEBI" id="CHEBI:33019"/>
        <dbReference type="ChEBI" id="CHEBI:57926"/>
        <dbReference type="ChEBI" id="CHEBI:73682"/>
        <dbReference type="EC" id="2.7.7.87"/>
    </reaction>
</comment>
<comment type="subcellular location">
    <subcellularLocation>
        <location evidence="1">Cytoplasm</location>
    </subcellularLocation>
</comment>
<comment type="similarity">
    <text evidence="1">Belongs to the SUA5 family. TsaC subfamily.</text>
</comment>
<keyword id="KW-0067">ATP-binding</keyword>
<keyword id="KW-0963">Cytoplasm</keyword>
<keyword id="KW-0547">Nucleotide-binding</keyword>
<keyword id="KW-0548">Nucleotidyltransferase</keyword>
<keyword id="KW-0808">Transferase</keyword>
<keyword id="KW-0819">tRNA processing</keyword>
<reference key="1">
    <citation type="submission" date="2007-11" db="EMBL/GenBank/DDBJ databases">
        <title>Genome sequencing of phylogenetically and phenotypically diverse Coxiella burnetii isolates.</title>
        <authorList>
            <person name="Seshadri R."/>
            <person name="Samuel J.E."/>
        </authorList>
    </citation>
    <scope>NUCLEOTIDE SEQUENCE [LARGE SCALE GENOMIC DNA]</scope>
    <source>
        <strain>RSA 331 / Henzerling II</strain>
    </source>
</reference>
<accession>A9N9G8</accession>
<organism>
    <name type="scientific">Coxiella burnetii (strain RSA 331 / Henzerling II)</name>
    <dbReference type="NCBI Taxonomy" id="360115"/>
    <lineage>
        <taxon>Bacteria</taxon>
        <taxon>Pseudomonadati</taxon>
        <taxon>Pseudomonadota</taxon>
        <taxon>Gammaproteobacteria</taxon>
        <taxon>Legionellales</taxon>
        <taxon>Coxiellaceae</taxon>
        <taxon>Coxiella</taxon>
    </lineage>
</organism>
<dbReference type="EC" id="2.7.7.87" evidence="1"/>
<dbReference type="EMBL" id="CP000890">
    <property type="protein sequence ID" value="ABX78483.1"/>
    <property type="molecule type" value="Genomic_DNA"/>
</dbReference>
<dbReference type="RefSeq" id="WP_012220042.1">
    <property type="nucleotide sequence ID" value="NC_010117.1"/>
</dbReference>
<dbReference type="SMR" id="A9N9G8"/>
<dbReference type="KEGG" id="cbs:COXBURSA331_A0083"/>
<dbReference type="HOGENOM" id="CLU_031397_6_0_6"/>
<dbReference type="GO" id="GO:0005737">
    <property type="term" value="C:cytoplasm"/>
    <property type="evidence" value="ECO:0007669"/>
    <property type="project" value="UniProtKB-SubCell"/>
</dbReference>
<dbReference type="GO" id="GO:0005524">
    <property type="term" value="F:ATP binding"/>
    <property type="evidence" value="ECO:0007669"/>
    <property type="project" value="UniProtKB-UniRule"/>
</dbReference>
<dbReference type="GO" id="GO:0003725">
    <property type="term" value="F:double-stranded RNA binding"/>
    <property type="evidence" value="ECO:0007669"/>
    <property type="project" value="InterPro"/>
</dbReference>
<dbReference type="GO" id="GO:0061710">
    <property type="term" value="F:L-threonylcarbamoyladenylate synthase"/>
    <property type="evidence" value="ECO:0007669"/>
    <property type="project" value="UniProtKB-EC"/>
</dbReference>
<dbReference type="GO" id="GO:0000049">
    <property type="term" value="F:tRNA binding"/>
    <property type="evidence" value="ECO:0007669"/>
    <property type="project" value="TreeGrafter"/>
</dbReference>
<dbReference type="GO" id="GO:0006450">
    <property type="term" value="P:regulation of translational fidelity"/>
    <property type="evidence" value="ECO:0007669"/>
    <property type="project" value="TreeGrafter"/>
</dbReference>
<dbReference type="GO" id="GO:0002949">
    <property type="term" value="P:tRNA threonylcarbamoyladenosine modification"/>
    <property type="evidence" value="ECO:0007669"/>
    <property type="project" value="UniProtKB-UniRule"/>
</dbReference>
<dbReference type="FunFam" id="3.90.870.10:FF:000004">
    <property type="entry name" value="Threonylcarbamoyl-AMP synthase"/>
    <property type="match status" value="1"/>
</dbReference>
<dbReference type="Gene3D" id="3.90.870.10">
    <property type="entry name" value="DHBP synthase"/>
    <property type="match status" value="1"/>
</dbReference>
<dbReference type="HAMAP" id="MF_01852">
    <property type="entry name" value="TsaC"/>
    <property type="match status" value="1"/>
</dbReference>
<dbReference type="InterPro" id="IPR017945">
    <property type="entry name" value="DHBP_synth_RibB-like_a/b_dom"/>
</dbReference>
<dbReference type="InterPro" id="IPR006070">
    <property type="entry name" value="Sua5-like_dom"/>
</dbReference>
<dbReference type="InterPro" id="IPR023535">
    <property type="entry name" value="TC-AMP_synthase"/>
</dbReference>
<dbReference type="InterPro" id="IPR050156">
    <property type="entry name" value="TC-AMP_synthase_SUA5"/>
</dbReference>
<dbReference type="NCBIfam" id="TIGR00057">
    <property type="entry name" value="L-threonylcarbamoyladenylate synthase"/>
    <property type="match status" value="1"/>
</dbReference>
<dbReference type="PANTHER" id="PTHR17490">
    <property type="entry name" value="SUA5"/>
    <property type="match status" value="1"/>
</dbReference>
<dbReference type="PANTHER" id="PTHR17490:SF18">
    <property type="entry name" value="THREONYLCARBAMOYL-AMP SYNTHASE"/>
    <property type="match status" value="1"/>
</dbReference>
<dbReference type="Pfam" id="PF01300">
    <property type="entry name" value="Sua5_yciO_yrdC"/>
    <property type="match status" value="1"/>
</dbReference>
<dbReference type="SUPFAM" id="SSF55821">
    <property type="entry name" value="YrdC/RibB"/>
    <property type="match status" value="1"/>
</dbReference>
<dbReference type="PROSITE" id="PS51163">
    <property type="entry name" value="YRDC"/>
    <property type="match status" value="1"/>
</dbReference>
<proteinExistence type="inferred from homology"/>
<name>TSAC_COXBR</name>
<feature type="chain" id="PRO_0000352909" description="Threonylcarbamoyl-AMP synthase">
    <location>
        <begin position="1"/>
        <end position="186"/>
    </location>
</feature>
<feature type="domain" description="YrdC-like" evidence="1">
    <location>
        <begin position="5"/>
        <end position="186"/>
    </location>
</feature>
<gene>
    <name evidence="1" type="primary">tsaC</name>
    <name type="synonym">rimN</name>
    <name type="ordered locus">COXBURSA331_A0083</name>
</gene>